<accession>Q4ZHG4</accession>
<accession>A6H8X2</accession>
<accession>B7ZBR4</accession>
<accession>B7ZBR5</accession>
<accession>B9EK49</accession>
<accession>Q5JPI0</accession>
<accession>Q5VU31</accession>
<accession>Q5VU32</accession>
<accession>Q5VXX4</accession>
<accession>Q70CQ6</accession>
<accession>Q96JG1</accession>
<protein>
    <recommendedName>
        <fullName>Fibronectin type III domain-containing protein 1</fullName>
    </recommendedName>
    <alternativeName>
        <fullName>Activation-associated cDNA protein</fullName>
    </alternativeName>
    <alternativeName>
        <fullName>Expressed in synovial lining protein</fullName>
    </alternativeName>
</protein>
<gene>
    <name type="primary">FNDC1</name>
    <name type="synonym">FNDC2</name>
    <name type="synonym">KIAA1866</name>
    <name type="synonym">MEL4B3</name>
</gene>
<keyword id="KW-0025">Alternative splicing</keyword>
<keyword id="KW-0325">Glycoprotein</keyword>
<keyword id="KW-0597">Phosphoprotein</keyword>
<keyword id="KW-1267">Proteomics identification</keyword>
<keyword id="KW-1185">Reference proteome</keyword>
<keyword id="KW-0677">Repeat</keyword>
<keyword id="KW-0964">Secreted</keyword>
<keyword id="KW-0732">Signal</keyword>
<comment type="function">
    <text evidence="1">May be an activator of G protein signaling.</text>
</comment>
<comment type="subcellular location">
    <subcellularLocation>
        <location evidence="13">Secreted</location>
    </subcellularLocation>
</comment>
<comment type="alternative products">
    <event type="alternative splicing"/>
    <isoform>
        <id>Q4ZHG4-1</id>
        <name>1</name>
        <sequence type="displayed"/>
    </isoform>
    <isoform>
        <id>Q4ZHG4-2</id>
        <name>2</name>
        <sequence type="described" ref="VSP_024663"/>
    </isoform>
</comment>
<comment type="tissue specificity">
    <text>Almost absent from healthy skin; especially in epidermal keratinocytes, skin fibroblasts or endothelial cells and is barely detectable in benign melanocytic naevi. Expressed in the stroma close to skin tumors, in the tumor cells themselves and in the epidermis of psoriasis.</text>
</comment>
<comment type="induction">
    <text evidence="8">By TGFB1 present in the melanoma cell conditioned medium (MCCM).</text>
</comment>
<comment type="caution">
    <text evidence="13">It is uncertain whether Met-1 or Met-53 is the initiator.</text>
</comment>
<comment type="sequence caution" evidence="13">
    <conflict type="erroneous initiation">
        <sequence resource="EMBL-CDS" id="AAI46784"/>
    </conflict>
    <text>Truncated N-terminus.</text>
</comment>
<comment type="sequence caution" evidence="13">
    <conflict type="erroneous initiation">
        <sequence resource="EMBL-CDS" id="AAI50608"/>
    </conflict>
    <text>Truncated N-terminus.</text>
</comment>
<comment type="sequence caution" evidence="13">
    <conflict type="erroneous initiation">
        <sequence resource="EMBL-CDS" id="AAY26234"/>
    </conflict>
    <text>Truncated N-terminus.</text>
</comment>
<comment type="sequence caution" evidence="13">
    <conflict type="frameshift">
        <sequence resource="EMBL-CDS" id="CAE51894"/>
    </conflict>
</comment>
<proteinExistence type="evidence at protein level"/>
<dbReference type="EMBL" id="DQ009660">
    <property type="protein sequence ID" value="AAY26234.1"/>
    <property type="status" value="ALT_INIT"/>
    <property type="molecule type" value="mRNA"/>
</dbReference>
<dbReference type="EMBL" id="AL355492">
    <property type="status" value="NOT_ANNOTATED_CDS"/>
    <property type="molecule type" value="Genomic_DNA"/>
</dbReference>
<dbReference type="EMBL" id="AL356417">
    <property type="status" value="NOT_ANNOTATED_CDS"/>
    <property type="molecule type" value="Genomic_DNA"/>
</dbReference>
<dbReference type="EMBL" id="AL590551">
    <property type="status" value="NOT_ANNOTATED_CDS"/>
    <property type="molecule type" value="Genomic_DNA"/>
</dbReference>
<dbReference type="EMBL" id="AB058769">
    <property type="protein sequence ID" value="BAB47495.2"/>
    <property type="molecule type" value="mRNA"/>
</dbReference>
<dbReference type="EMBL" id="BC146783">
    <property type="protein sequence ID" value="AAI46784.1"/>
    <property type="status" value="ALT_INIT"/>
    <property type="molecule type" value="mRNA"/>
</dbReference>
<dbReference type="EMBL" id="BC150607">
    <property type="protein sequence ID" value="AAI50608.1"/>
    <property type="status" value="ALT_INIT"/>
    <property type="molecule type" value="mRNA"/>
</dbReference>
<dbReference type="EMBL" id="AL832410">
    <property type="protein sequence ID" value="CAI46178.2"/>
    <property type="molecule type" value="mRNA"/>
</dbReference>
<dbReference type="EMBL" id="AJ586132">
    <property type="protein sequence ID" value="CAE51894.1"/>
    <property type="status" value="ALT_FRAME"/>
    <property type="molecule type" value="mRNA"/>
</dbReference>
<dbReference type="CCDS" id="CCDS47512.1">
    <molecule id="Q4ZHG4-1"/>
</dbReference>
<dbReference type="RefSeq" id="NP_115921.2">
    <molecule id="Q4ZHG4-1"/>
    <property type="nucleotide sequence ID" value="NM_032532.3"/>
</dbReference>
<dbReference type="SMR" id="Q4ZHG4"/>
<dbReference type="BioGRID" id="124154">
    <property type="interactions" value="23"/>
</dbReference>
<dbReference type="CORUM" id="Q4ZHG4"/>
<dbReference type="FunCoup" id="Q4ZHG4">
    <property type="interactions" value="14"/>
</dbReference>
<dbReference type="IntAct" id="Q4ZHG4">
    <property type="interactions" value="22"/>
</dbReference>
<dbReference type="STRING" id="9606.ENSP00000297267"/>
<dbReference type="GlyCosmos" id="Q4ZHG4">
    <property type="glycosylation" value="3 sites, 1 glycan"/>
</dbReference>
<dbReference type="GlyGen" id="Q4ZHG4">
    <property type="glycosylation" value="18 sites, 3 O-linked glycans (16 sites)"/>
</dbReference>
<dbReference type="iPTMnet" id="Q4ZHG4"/>
<dbReference type="PhosphoSitePlus" id="Q4ZHG4"/>
<dbReference type="BioMuta" id="FNDC1"/>
<dbReference type="DMDM" id="298286926"/>
<dbReference type="jPOST" id="Q4ZHG4"/>
<dbReference type="MassIVE" id="Q4ZHG4"/>
<dbReference type="PaxDb" id="9606-ENSP00000297267"/>
<dbReference type="PeptideAtlas" id="Q4ZHG4"/>
<dbReference type="ProteomicsDB" id="62382">
    <molecule id="Q4ZHG4-1"/>
</dbReference>
<dbReference type="ProteomicsDB" id="62383">
    <molecule id="Q4ZHG4-2"/>
</dbReference>
<dbReference type="Antibodypedia" id="50561">
    <property type="antibodies" value="44 antibodies from 9 providers"/>
</dbReference>
<dbReference type="DNASU" id="84624"/>
<dbReference type="Ensembl" id="ENST00000297267.14">
    <molecule id="Q4ZHG4-1"/>
    <property type="protein sequence ID" value="ENSP00000297267.9"/>
    <property type="gene ID" value="ENSG00000164694.17"/>
</dbReference>
<dbReference type="GeneID" id="84624"/>
<dbReference type="KEGG" id="hsa:84624"/>
<dbReference type="MANE-Select" id="ENST00000297267.14">
    <property type="protein sequence ID" value="ENSP00000297267.9"/>
    <property type="RefSeq nucleotide sequence ID" value="NM_032532.3"/>
    <property type="RefSeq protein sequence ID" value="NP_115921.2"/>
</dbReference>
<dbReference type="UCSC" id="uc010kjv.4">
    <molecule id="Q4ZHG4-1"/>
    <property type="organism name" value="human"/>
</dbReference>
<dbReference type="AGR" id="HGNC:21184"/>
<dbReference type="CTD" id="84624"/>
<dbReference type="DisGeNET" id="84624"/>
<dbReference type="GeneCards" id="FNDC1"/>
<dbReference type="HGNC" id="HGNC:21184">
    <property type="gene designation" value="FNDC1"/>
</dbReference>
<dbReference type="HPA" id="ENSG00000164694">
    <property type="expression patterns" value="Tissue enhanced (gallbladder, intestine, thyroid gland)"/>
</dbReference>
<dbReference type="MIM" id="609991">
    <property type="type" value="gene"/>
</dbReference>
<dbReference type="neXtProt" id="NX_Q4ZHG4"/>
<dbReference type="OpenTargets" id="ENSG00000164694"/>
<dbReference type="PharmGKB" id="PA134906656"/>
<dbReference type="VEuPathDB" id="HostDB:ENSG00000164694"/>
<dbReference type="eggNOG" id="KOG4221">
    <property type="taxonomic scope" value="Eukaryota"/>
</dbReference>
<dbReference type="GeneTree" id="ENSGT00530000063558"/>
<dbReference type="HOGENOM" id="CLU_002998_0_0_1"/>
<dbReference type="InParanoid" id="Q4ZHG4"/>
<dbReference type="OMA" id="QIGFGTP"/>
<dbReference type="OrthoDB" id="6129306at2759"/>
<dbReference type="PAN-GO" id="Q4ZHG4">
    <property type="GO annotations" value="0 GO annotations based on evolutionary models"/>
</dbReference>
<dbReference type="PhylomeDB" id="Q4ZHG4"/>
<dbReference type="TreeFam" id="TF337588"/>
<dbReference type="PathwayCommons" id="Q4ZHG4"/>
<dbReference type="BioGRID-ORCS" id="84624">
    <property type="hits" value="12 hits in 1139 CRISPR screens"/>
</dbReference>
<dbReference type="ChiTaRS" id="FNDC1">
    <property type="organism name" value="human"/>
</dbReference>
<dbReference type="GenomeRNAi" id="84624"/>
<dbReference type="Pharos" id="Q4ZHG4">
    <property type="development level" value="Tbio"/>
</dbReference>
<dbReference type="PRO" id="PR:Q4ZHG4"/>
<dbReference type="Proteomes" id="UP000005640">
    <property type="component" value="Chromosome 6"/>
</dbReference>
<dbReference type="RNAct" id="Q4ZHG4">
    <property type="molecule type" value="protein"/>
</dbReference>
<dbReference type="Bgee" id="ENSG00000164694">
    <property type="expression patterns" value="Expressed in tendon of biceps brachii and 131 other cell types or tissues"/>
</dbReference>
<dbReference type="ExpressionAtlas" id="Q4ZHG4">
    <property type="expression patterns" value="baseline and differential"/>
</dbReference>
<dbReference type="GO" id="GO:0005576">
    <property type="term" value="C:extracellular region"/>
    <property type="evidence" value="ECO:0007669"/>
    <property type="project" value="UniProtKB-SubCell"/>
</dbReference>
<dbReference type="CDD" id="cd00063">
    <property type="entry name" value="FN3"/>
    <property type="match status" value="5"/>
</dbReference>
<dbReference type="FunFam" id="2.60.40.10:FF:000778">
    <property type="entry name" value="Fibronectin type III domain containing 1"/>
    <property type="match status" value="1"/>
</dbReference>
<dbReference type="FunFam" id="2.60.40.10:FF:001228">
    <property type="entry name" value="Fibronectin type III domain containing 1"/>
    <property type="match status" value="1"/>
</dbReference>
<dbReference type="FunFam" id="2.60.40.10:FF:001330">
    <property type="entry name" value="Fibronectin type III domain containing 1"/>
    <property type="match status" value="1"/>
</dbReference>
<dbReference type="FunFam" id="2.60.40.10:FF:003085">
    <property type="entry name" value="Fibronectin type III domain-containing protein 1"/>
    <property type="match status" value="1"/>
</dbReference>
<dbReference type="Gene3D" id="2.60.40.10">
    <property type="entry name" value="Immunoglobulins"/>
    <property type="match status" value="5"/>
</dbReference>
<dbReference type="InterPro" id="IPR003961">
    <property type="entry name" value="FN3_dom"/>
</dbReference>
<dbReference type="InterPro" id="IPR036116">
    <property type="entry name" value="FN3_sf"/>
</dbReference>
<dbReference type="InterPro" id="IPR013783">
    <property type="entry name" value="Ig-like_fold"/>
</dbReference>
<dbReference type="InterPro" id="IPR049109">
    <property type="entry name" value="TARSH/FNDC1_C"/>
</dbReference>
<dbReference type="PANTHER" id="PTHR23197:SF8">
    <property type="entry name" value="FIBRONECTIN TYPE III DOMAIN-CONTAINING PROTEIN 1"/>
    <property type="match status" value="1"/>
</dbReference>
<dbReference type="PANTHER" id="PTHR23197">
    <property type="entry name" value="TARSH-RELATED FIBRONECTIN DOMAIN-CONTAINING"/>
    <property type="match status" value="1"/>
</dbReference>
<dbReference type="Pfam" id="PF00041">
    <property type="entry name" value="fn3"/>
    <property type="match status" value="3"/>
</dbReference>
<dbReference type="Pfam" id="PF21731">
    <property type="entry name" value="TARSH_C"/>
    <property type="match status" value="1"/>
</dbReference>
<dbReference type="SMART" id="SM00060">
    <property type="entry name" value="FN3"/>
    <property type="match status" value="5"/>
</dbReference>
<dbReference type="SUPFAM" id="SSF49265">
    <property type="entry name" value="Fibronectin type III"/>
    <property type="match status" value="3"/>
</dbReference>
<dbReference type="PROSITE" id="PS50853">
    <property type="entry name" value="FN3"/>
    <property type="match status" value="5"/>
</dbReference>
<reference key="1">
    <citation type="journal article" date="1998" name="Arthritis Rheum.">
        <title>Use of differential subtraction method to identify genes that characterize the phenotype of cultured rheumatoid arthritis synoviocytes.</title>
        <authorList>
            <person name="Seki T."/>
            <person name="Selby J."/>
            <person name="Haupl T."/>
            <person name="Winchester R."/>
        </authorList>
    </citation>
    <scope>NUCLEOTIDE SEQUENCE [MRNA] (ISOFORM 1)</scope>
    <scope>VARIANTS 1479-THR--THR-1484 DEL AND LYS-1504</scope>
</reference>
<reference key="2">
    <citation type="journal article" date="2003" name="Nature">
        <title>The DNA sequence and analysis of human chromosome 6.</title>
        <authorList>
            <person name="Mungall A.J."/>
            <person name="Palmer S.A."/>
            <person name="Sims S.K."/>
            <person name="Edwards C.A."/>
            <person name="Ashurst J.L."/>
            <person name="Wilming L."/>
            <person name="Jones M.C."/>
            <person name="Horton R."/>
            <person name="Hunt S.E."/>
            <person name="Scott C.E."/>
            <person name="Gilbert J.G.R."/>
            <person name="Clamp M.E."/>
            <person name="Bethel G."/>
            <person name="Milne S."/>
            <person name="Ainscough R."/>
            <person name="Almeida J.P."/>
            <person name="Ambrose K.D."/>
            <person name="Andrews T.D."/>
            <person name="Ashwell R.I.S."/>
            <person name="Babbage A.K."/>
            <person name="Bagguley C.L."/>
            <person name="Bailey J."/>
            <person name="Banerjee R."/>
            <person name="Barker D.J."/>
            <person name="Barlow K.F."/>
            <person name="Bates K."/>
            <person name="Beare D.M."/>
            <person name="Beasley H."/>
            <person name="Beasley O."/>
            <person name="Bird C.P."/>
            <person name="Blakey S.E."/>
            <person name="Bray-Allen S."/>
            <person name="Brook J."/>
            <person name="Brown A.J."/>
            <person name="Brown J.Y."/>
            <person name="Burford D.C."/>
            <person name="Burrill W."/>
            <person name="Burton J."/>
            <person name="Carder C."/>
            <person name="Carter N.P."/>
            <person name="Chapman J.C."/>
            <person name="Clark S.Y."/>
            <person name="Clark G."/>
            <person name="Clee C.M."/>
            <person name="Clegg S."/>
            <person name="Cobley V."/>
            <person name="Collier R.E."/>
            <person name="Collins J.E."/>
            <person name="Colman L.K."/>
            <person name="Corby N.R."/>
            <person name="Coville G.J."/>
            <person name="Culley K.M."/>
            <person name="Dhami P."/>
            <person name="Davies J."/>
            <person name="Dunn M."/>
            <person name="Earthrowl M.E."/>
            <person name="Ellington A.E."/>
            <person name="Evans K.A."/>
            <person name="Faulkner L."/>
            <person name="Francis M.D."/>
            <person name="Frankish A."/>
            <person name="Frankland J."/>
            <person name="French L."/>
            <person name="Garner P."/>
            <person name="Garnett J."/>
            <person name="Ghori M.J."/>
            <person name="Gilby L.M."/>
            <person name="Gillson C.J."/>
            <person name="Glithero R.J."/>
            <person name="Grafham D.V."/>
            <person name="Grant M."/>
            <person name="Gribble S."/>
            <person name="Griffiths C."/>
            <person name="Griffiths M.N.D."/>
            <person name="Hall R."/>
            <person name="Halls K.S."/>
            <person name="Hammond S."/>
            <person name="Harley J.L."/>
            <person name="Hart E.A."/>
            <person name="Heath P.D."/>
            <person name="Heathcott R."/>
            <person name="Holmes S.J."/>
            <person name="Howden P.J."/>
            <person name="Howe K.L."/>
            <person name="Howell G.R."/>
            <person name="Huckle E."/>
            <person name="Humphray S.J."/>
            <person name="Humphries M.D."/>
            <person name="Hunt A.R."/>
            <person name="Johnson C.M."/>
            <person name="Joy A.A."/>
            <person name="Kay M."/>
            <person name="Keenan S.J."/>
            <person name="Kimberley A.M."/>
            <person name="King A."/>
            <person name="Laird G.K."/>
            <person name="Langford C."/>
            <person name="Lawlor S."/>
            <person name="Leongamornlert D.A."/>
            <person name="Leversha M."/>
            <person name="Lloyd C.R."/>
            <person name="Lloyd D.M."/>
            <person name="Loveland J.E."/>
            <person name="Lovell J."/>
            <person name="Martin S."/>
            <person name="Mashreghi-Mohammadi M."/>
            <person name="Maslen G.L."/>
            <person name="Matthews L."/>
            <person name="McCann O.T."/>
            <person name="McLaren S.J."/>
            <person name="McLay K."/>
            <person name="McMurray A."/>
            <person name="Moore M.J.F."/>
            <person name="Mullikin J.C."/>
            <person name="Niblett D."/>
            <person name="Nickerson T."/>
            <person name="Novik K.L."/>
            <person name="Oliver K."/>
            <person name="Overton-Larty E.K."/>
            <person name="Parker A."/>
            <person name="Patel R."/>
            <person name="Pearce A.V."/>
            <person name="Peck A.I."/>
            <person name="Phillimore B.J.C.T."/>
            <person name="Phillips S."/>
            <person name="Plumb R.W."/>
            <person name="Porter K.M."/>
            <person name="Ramsey Y."/>
            <person name="Ranby S.A."/>
            <person name="Rice C.M."/>
            <person name="Ross M.T."/>
            <person name="Searle S.M."/>
            <person name="Sehra H.K."/>
            <person name="Sheridan E."/>
            <person name="Skuce C.D."/>
            <person name="Smith S."/>
            <person name="Smith M."/>
            <person name="Spraggon L."/>
            <person name="Squares S.L."/>
            <person name="Steward C.A."/>
            <person name="Sycamore N."/>
            <person name="Tamlyn-Hall G."/>
            <person name="Tester J."/>
            <person name="Theaker A.J."/>
            <person name="Thomas D.W."/>
            <person name="Thorpe A."/>
            <person name="Tracey A."/>
            <person name="Tromans A."/>
            <person name="Tubby B."/>
            <person name="Wall M."/>
            <person name="Wallis J.M."/>
            <person name="West A.P."/>
            <person name="White S.S."/>
            <person name="Whitehead S.L."/>
            <person name="Whittaker H."/>
            <person name="Wild A."/>
            <person name="Willey D.J."/>
            <person name="Wilmer T.E."/>
            <person name="Wood J.M."/>
            <person name="Wray P.W."/>
            <person name="Wyatt J.C."/>
            <person name="Young L."/>
            <person name="Younger R.M."/>
            <person name="Bentley D.R."/>
            <person name="Coulson A."/>
            <person name="Durbin R.M."/>
            <person name="Hubbard T."/>
            <person name="Sulston J.E."/>
            <person name="Dunham I."/>
            <person name="Rogers J."/>
            <person name="Beck S."/>
        </authorList>
    </citation>
    <scope>NUCLEOTIDE SEQUENCE [LARGE SCALE GENOMIC DNA]</scope>
</reference>
<reference key="3">
    <citation type="journal article" date="2001" name="DNA Res.">
        <title>Prediction of the coding sequences of unidentified human genes. XX. The complete sequences of 100 new cDNA clones from brain which code for large proteins in vitro.</title>
        <authorList>
            <person name="Nagase T."/>
            <person name="Nakayama M."/>
            <person name="Nakajima D."/>
            <person name="Kikuno R."/>
            <person name="Ohara O."/>
        </authorList>
    </citation>
    <scope>NUCLEOTIDE SEQUENCE [LARGE SCALE MRNA] OF 43-1894 (ISOFORM 2)</scope>
    <scope>VARIANTS GLN-463; GLU-1003; GLU-1180; PRO-1261; ARG-1280; 1479-THR--THR-1484 DEL AND LYS-1504</scope>
    <source>
        <tissue>Brain</tissue>
    </source>
</reference>
<reference key="4">
    <citation type="journal article" date="2004" name="Genome Res.">
        <title>The status, quality, and expansion of the NIH full-length cDNA project: the Mammalian Gene Collection (MGC).</title>
        <authorList>
            <consortium name="The MGC Project Team"/>
        </authorList>
    </citation>
    <scope>NUCLEOTIDE SEQUENCE [LARGE SCALE MRNA] OF 43-1894 (ISOFORMS 1 AND 2)</scope>
    <scope>VARIANTS ALA-438; GLN-463; GLU-1003; GLU-1180; PRO-1261; ARG-1280; 1479-THR--THR-1484 DEL AND LYS-1504</scope>
    <source>
        <tissue>Testis</tissue>
    </source>
</reference>
<reference key="5">
    <citation type="journal article" date="2007" name="BMC Genomics">
        <title>The full-ORF clone resource of the German cDNA consortium.</title>
        <authorList>
            <person name="Bechtel S."/>
            <person name="Rosenfelder H."/>
            <person name="Duda A."/>
            <person name="Schmidt C.P."/>
            <person name="Ernst U."/>
            <person name="Wellenreuther R."/>
            <person name="Mehrle A."/>
            <person name="Schuster C."/>
            <person name="Bahr A."/>
            <person name="Bloecker H."/>
            <person name="Heubner D."/>
            <person name="Hoerlein A."/>
            <person name="Michel G."/>
            <person name="Wedler H."/>
            <person name="Koehrer K."/>
            <person name="Ottenwaelder B."/>
            <person name="Poustka A."/>
            <person name="Wiemann S."/>
            <person name="Schupp I."/>
        </authorList>
    </citation>
    <scope>NUCLEOTIDE SEQUENCE [LARGE SCALE MRNA] OF 1196-1894 (ISOFORM 1)</scope>
    <scope>VARIANTS PRO-1261; ARG-1280; 1479-THR--THR-1484 DEL AND LYS-1504</scope>
    <source>
        <tissue>Lymph node</tissue>
    </source>
</reference>
<reference key="6">
    <citation type="journal article" date="2005" name="Exp. Dermatol.">
        <title>MEL4B3, a novel mRNA is induced in skin tumors and regulated by TGF-beta and pro-inflammatory cytokines.</title>
        <authorList>
            <person name="Anderegg U."/>
            <person name="Breitschwerdt K."/>
            <person name="Koehler M.J."/>
            <person name="Sticherling M."/>
            <person name="Haustein U.-F."/>
            <person name="Simon J.C."/>
            <person name="Saalbach A."/>
        </authorList>
    </citation>
    <scope>NUCLEOTIDE SEQUENCE [MRNA] OF 1295-1894 (ISOFORM 1)</scope>
    <scope>INDUCTION BY TGFB1</scope>
    <scope>VARIANTS 1479-THR--THR-1484 DEL AND LYS-1504</scope>
</reference>
<evidence type="ECO:0000250" key="1"/>
<evidence type="ECO:0000250" key="2">
    <source>
        <dbReference type="UniProtKB" id="Q2Q0I9"/>
    </source>
</evidence>
<evidence type="ECO:0000255" key="3"/>
<evidence type="ECO:0000255" key="4">
    <source>
        <dbReference type="PROSITE-ProRule" id="PRU00316"/>
    </source>
</evidence>
<evidence type="ECO:0000256" key="5">
    <source>
        <dbReference type="SAM" id="MobiDB-lite"/>
    </source>
</evidence>
<evidence type="ECO:0000269" key="6">
    <source>
    </source>
</evidence>
<evidence type="ECO:0000269" key="7">
    <source>
    </source>
</evidence>
<evidence type="ECO:0000269" key="8">
    <source>
    </source>
</evidence>
<evidence type="ECO:0000269" key="9">
    <source>
    </source>
</evidence>
<evidence type="ECO:0000269" key="10">
    <source>
    </source>
</evidence>
<evidence type="ECO:0000303" key="11">
    <source>
    </source>
</evidence>
<evidence type="ECO:0000303" key="12">
    <source>
    </source>
</evidence>
<evidence type="ECO:0000305" key="13"/>
<feature type="signal peptide" evidence="3">
    <location>
        <begin position="1"/>
        <end position="32"/>
    </location>
</feature>
<feature type="chain" id="PRO_0000284831" description="Fibronectin type III domain-containing protein 1">
    <location>
        <begin position="33"/>
        <end position="1894"/>
    </location>
</feature>
<feature type="domain" description="Fibronectin type-III 1" evidence="4">
    <location>
        <begin position="39"/>
        <end position="131"/>
    </location>
</feature>
<feature type="domain" description="Fibronectin type-III 2" evidence="4">
    <location>
        <begin position="158"/>
        <end position="258"/>
    </location>
</feature>
<feature type="domain" description="Fibronectin type-III 3" evidence="4">
    <location>
        <begin position="262"/>
        <end position="357"/>
    </location>
</feature>
<feature type="domain" description="Fibronectin type-III 4" evidence="4">
    <location>
        <begin position="362"/>
        <end position="457"/>
    </location>
</feature>
<feature type="domain" description="Fibronectin type-III 5" evidence="4">
    <location>
        <begin position="1658"/>
        <end position="1752"/>
    </location>
</feature>
<feature type="region of interest" description="Disordered" evidence="5">
    <location>
        <begin position="455"/>
        <end position="500"/>
    </location>
</feature>
<feature type="region of interest" description="Disordered" evidence="5">
    <location>
        <begin position="515"/>
        <end position="1271"/>
    </location>
</feature>
<feature type="region of interest" description="Disordered" evidence="5">
    <location>
        <begin position="1311"/>
        <end position="1350"/>
    </location>
</feature>
<feature type="region of interest" description="Disordered" evidence="5">
    <location>
        <begin position="1444"/>
        <end position="1515"/>
    </location>
</feature>
<feature type="compositionally biased region" description="Basic residues" evidence="5">
    <location>
        <begin position="565"/>
        <end position="574"/>
    </location>
</feature>
<feature type="compositionally biased region" description="Low complexity" evidence="5">
    <location>
        <begin position="614"/>
        <end position="625"/>
    </location>
</feature>
<feature type="compositionally biased region" description="Polar residues" evidence="5">
    <location>
        <begin position="626"/>
        <end position="641"/>
    </location>
</feature>
<feature type="compositionally biased region" description="Low complexity" evidence="5">
    <location>
        <begin position="711"/>
        <end position="722"/>
    </location>
</feature>
<feature type="compositionally biased region" description="Low complexity" evidence="5">
    <location>
        <begin position="759"/>
        <end position="778"/>
    </location>
</feature>
<feature type="compositionally biased region" description="Basic and acidic residues" evidence="5">
    <location>
        <begin position="786"/>
        <end position="799"/>
    </location>
</feature>
<feature type="compositionally biased region" description="Polar residues" evidence="5">
    <location>
        <begin position="941"/>
        <end position="957"/>
    </location>
</feature>
<feature type="compositionally biased region" description="Polar residues" evidence="5">
    <location>
        <begin position="1027"/>
        <end position="1060"/>
    </location>
</feature>
<feature type="compositionally biased region" description="Acidic residues" evidence="5">
    <location>
        <begin position="1071"/>
        <end position="1088"/>
    </location>
</feature>
<feature type="compositionally biased region" description="Polar residues" evidence="5">
    <location>
        <begin position="1166"/>
        <end position="1176"/>
    </location>
</feature>
<feature type="compositionally biased region" description="Low complexity" evidence="5">
    <location>
        <begin position="1197"/>
        <end position="1209"/>
    </location>
</feature>
<feature type="compositionally biased region" description="Basic and acidic residues" evidence="5">
    <location>
        <begin position="1211"/>
        <end position="1226"/>
    </location>
</feature>
<feature type="compositionally biased region" description="Low complexity" evidence="5">
    <location>
        <begin position="1445"/>
        <end position="1504"/>
    </location>
</feature>
<feature type="modified residue" description="Phosphoserine" evidence="2">
    <location>
        <position position="717"/>
    </location>
</feature>
<feature type="glycosylation site" description="N-linked (GlcNAc...) asparagine" evidence="3">
    <location>
        <position position="149"/>
    </location>
</feature>
<feature type="glycosylation site" description="N-linked (GlcNAc...) asparagine" evidence="3">
    <location>
        <position position="1661"/>
    </location>
</feature>
<feature type="splice variant" id="VSP_024663" description="In isoform 2." evidence="11 12">
    <original>EYILSYAPALKPFGAKSLTYPGDTTSALVDGLQPGERYLFKIRATNRRGLGPHSKAFIVAMPTT</original>
    <variation>A</variation>
    <location>
        <begin position="394"/>
        <end position="457"/>
    </location>
</feature>
<feature type="sequence variant" id="VAR_031826" description="In dbSNP:rs509648." evidence="7">
    <original>T</original>
    <variation>A</variation>
    <location>
        <position position="438"/>
    </location>
</feature>
<feature type="sequence variant" id="VAR_031827" description="In dbSNP:rs420137." evidence="6 7">
    <original>E</original>
    <variation>Q</variation>
    <location>
        <position position="463"/>
    </location>
</feature>
<feature type="sequence variant" id="VAR_031828" description="In dbSNP:rs370434." evidence="6 7">
    <original>Q</original>
    <variation>E</variation>
    <location>
        <position position="1003"/>
    </location>
</feature>
<feature type="sequence variant" id="VAR_031829" description="In dbSNP:rs420054." evidence="6 7">
    <original>D</original>
    <variation>E</variation>
    <location>
        <position position="1180"/>
    </location>
</feature>
<feature type="sequence variant" id="VAR_031830" description="In dbSNP:rs3003174." evidence="6 7 9">
    <original>L</original>
    <variation>P</variation>
    <location>
        <position position="1261"/>
    </location>
</feature>
<feature type="sequence variant" id="VAR_031831" description="In dbSNP:rs2501176." evidence="6 7 9">
    <original>Q</original>
    <variation>R</variation>
    <location>
        <position position="1280"/>
    </location>
</feature>
<feature type="sequence variant" id="VAR_063225" description="In dbSNP:rs3842694." evidence="6 7 8 9 10">
    <location>
        <begin position="1479"/>
        <end position="1484"/>
    </location>
</feature>
<feature type="sequence variant" id="VAR_031832" description="In dbSNP:rs386360." evidence="6 7 8 9 10">
    <original>T</original>
    <variation>K</variation>
    <location>
        <position position="1504"/>
    </location>
</feature>
<feature type="sequence variant" id="VAR_031833" description="In dbSNP:rs7763726.">
    <original>T</original>
    <variation>A</variation>
    <location>
        <position position="1574"/>
    </location>
</feature>
<feature type="sequence conflict" description="In Ref. 1; AAY26234." evidence="13" ref="1">
    <original>S</original>
    <variation>P</variation>
    <location>
        <position position="36"/>
    </location>
</feature>
<feature type="sequence conflict" description="In Ref. 4; AAI50608." evidence="13" ref="4">
    <original>P</original>
    <variation>S</variation>
    <location>
        <position position="122"/>
    </location>
</feature>
<feature type="sequence conflict" description="In Ref. 6; CAE51894." evidence="13" ref="6">
    <original>M</original>
    <variation>K</variation>
    <location>
        <position position="1295"/>
    </location>
</feature>
<feature type="sequence conflict" description="In Ref. 6; CAE51894." evidence="13" ref="6">
    <original>P</original>
    <variation>S</variation>
    <location>
        <position position="1487"/>
    </location>
</feature>
<feature type="sequence conflict" description="In Ref. 6; CAE51894." evidence="13" ref="6">
    <original>D</original>
    <variation>N</variation>
    <location>
        <position position="1685"/>
    </location>
</feature>
<feature type="sequence conflict" description="In Ref. 6; CAE51894." evidence="13" ref="6">
    <original>W</original>
    <variation>G</variation>
    <location>
        <position position="1894"/>
    </location>
</feature>
<name>FNDC1_HUMAN</name>
<sequence>MAPEAGATLRAPRRLSWAALLLLAALLPVASSAAASVDHPLKPRHVKLLSTKMGLKVTWDPPKDATSRPVEHYNIAYGKSLKSLKYIKVNAETYSFLIEDVEPGVVYFVLLTAENHSGVSRPVYRAESPPGGEWIEIDGFPIKGPGPFNETVTEKEVPNKPLRVRVRSSDDRLSVAWKAPRLSGAKSPRRSRGFLLGYGESGRKMNYVPLTRDERTHEIKKLASESVYVVSLQSMNSQGRSQPVYRAALTKRKISEEDELDVPDDISVRVMSSQSVLVSWVDPVLEKQKKVVASRQYTVRYREKGELARWDYKQIANRRVLIENLIPDTVYEFAVRISQGERDGKWSTSVFQRTPESAPTTAPENLNVWPVNGKPTVVAASWDALPETEGKVKEYILSYAPALKPFGAKSLTYPGDTTSALVDGLQPGERYLFKIRATNRRGLGPHSKAFIVAMPTTSKADVEQNTEDNGKPEKPEPSSPSPRAPASSQHPSVPASPQGRNAKDLLLDLKNKILANGGAPRKPQLRAKKAEELDLQSTEITGEEELGSREDSPMSPSDTQDQKRTLRPPSRHGHSVVAPGRTAVRARMPALPRREGVDKPGFSLATQPRPGAPPSASASPAHHASTQGTSHRPSLPASLNDNDLVDSDEDERAVGSLHPKGAFAQPRPALSPSRQSPSSVLRDRSSVHPGAKPASPARRTPHSGAAEEDSSASAPPSRLSPPHGGSSRLLPTQPHLSSPLSKGGKDGEDAPATNSNAPSRSTMSSSVSSHLSSRTQVSEGAEASDGESHGDGDREDGGRQAEATAQTLRARPASGHFHLLRHKPFAANGRSPSRFSIGRGPRLQPSSSPQSTVPSRAHPRVPSHSDSHPKLSSGIHGDEEDEKPLPATVVNDHVPSSSRQPISRGWEDLRRSPQRGASLHRKEPIPENPKSTGADTHPQGKYSSLASKAQDVQQSTDADTEGHSPKAQPGSTDRHASPARPPAARSQQHPSVPRRMTPGRAPQQQPPPPVATSQHHPGPQSRDAGRSPSQPRLSLTQAGRPRPTSQGRSHSSSDPYTASSRGMLPTALQNQDEDAQGSYDDDSTEVEAQDVRAPAHAARAKEAAASLPKHQQVESPTGAGAGGDHRSQRGHAASPARPSRPGGPQSRARVPSRAAPGKSEPPSKRPLSSKSQQSVSAEDDEEEDAGFFKGGKEDLLSSSVPKWPSSSTPRGGKDADGSLAKEEREPAIALAPRGGSLAPVKRPLPPPPGSSPRASHVPSRLPPRSAATVSPVAGTHPWPQYTTRAPPGHFSTTPMLSLRQRMMHARFRNPLSRQPARPSYRQGYNGRPNVEGKVLPGSNGKPNGQRIINGPQGTKWVVDLDRGLVLNAEGRYLQDSHGNPLRIKLGGDGRTIVDLEGTPVVSPDGLPLFGQGRHGTPLANAQDKPILSLGGKPLVGLEVIKKTTHPPTTTMQPTTTTTPLPTTTTPRPTTATTRRTTTTRRTTTRRPTTTVRTTTRTTTTTTPTPTTPIPTCPPGTLERHDDDGNLIMSSNGIPECYAEEDEFSGLETDTAVPTEEAYVIYDEDYEFETSRPPTTTEPSTTATTPRVIPEEGAISSFPEEEFDLAGRKRFVAPYVTYLNKDPSAPCSLTDALDHFQVDSLDEIIPNDLKKSDLPPQHAPRNITVVAVEGCHSFVIVDWDKATPGDVVTGYLVYSASYEDFIRNKWSTQASSVTHLPIENLKPNTRYYFKVQAQNPHGYGPISPSVSFVTESDNPLLVVRPPGGEPIWIPFAFKHDPSYTDCHGRQYVKRTWYRKFVGVVLCNSLRYKIYLSDNLKDTFYSIGDSWGRGEDHCQFVDSHLDGRTGPQSYVEALPTIQGYYRQYRQEPVRFGNIGFGTPYYYVGWYECGVSIPGKW</sequence>
<organism>
    <name type="scientific">Homo sapiens</name>
    <name type="common">Human</name>
    <dbReference type="NCBI Taxonomy" id="9606"/>
    <lineage>
        <taxon>Eukaryota</taxon>
        <taxon>Metazoa</taxon>
        <taxon>Chordata</taxon>
        <taxon>Craniata</taxon>
        <taxon>Vertebrata</taxon>
        <taxon>Euteleostomi</taxon>
        <taxon>Mammalia</taxon>
        <taxon>Eutheria</taxon>
        <taxon>Euarchontoglires</taxon>
        <taxon>Primates</taxon>
        <taxon>Haplorrhini</taxon>
        <taxon>Catarrhini</taxon>
        <taxon>Hominidae</taxon>
        <taxon>Homo</taxon>
    </lineage>
</organism>